<name>ACDB_METTH</name>
<organism>
    <name type="scientific">Methanothermobacter thermautotrophicus (strain ATCC 29096 / DSM 1053 / JCM 10044 / NBRC 100330 / Delta H)</name>
    <name type="common">Methanobacterium thermoautotrophicum</name>
    <dbReference type="NCBI Taxonomy" id="187420"/>
    <lineage>
        <taxon>Archaea</taxon>
        <taxon>Methanobacteriati</taxon>
        <taxon>Methanobacteriota</taxon>
        <taxon>Methanomada group</taxon>
        <taxon>Methanobacteria</taxon>
        <taxon>Methanobacteriales</taxon>
        <taxon>Methanobacteriaceae</taxon>
        <taxon>Methanothermobacter</taxon>
    </lineage>
</organism>
<evidence type="ECO:0000255" key="1">
    <source>
        <dbReference type="HAMAP-Rule" id="MF_01138"/>
    </source>
</evidence>
<evidence type="ECO:0000256" key="2">
    <source>
        <dbReference type="SAM" id="MobiDB-lite"/>
    </source>
</evidence>
<comment type="function">
    <text evidence="1">Part of a complex that catalyzes the reversible cleavage of acetyl-CoA, allowing autotrophic growth from CO(2). The alpha-epsilon complex generates CO from CO(2), while the beta subunit (this protein) combines the CO with CoA and a methyl group to form acetyl-CoA. The methyl group, which is incorporated into acetyl-CoA, is transferred to the beta subunit by a corrinoid iron-sulfur protein (the gamma-delta complex).</text>
</comment>
<comment type="catalytic activity">
    <reaction evidence="1">
        <text>Co(I)-[corrinoid Fe-S protein] + acetyl-CoA + H(+) = methyl-Co(III)-[corrinoid Fe-S protein] + CO + CoA</text>
        <dbReference type="Rhea" id="RHEA:45212"/>
        <dbReference type="Rhea" id="RHEA-COMP:11110"/>
        <dbReference type="Rhea" id="RHEA-COMP:11111"/>
        <dbReference type="ChEBI" id="CHEBI:15378"/>
        <dbReference type="ChEBI" id="CHEBI:17245"/>
        <dbReference type="ChEBI" id="CHEBI:57287"/>
        <dbReference type="ChEBI" id="CHEBI:57288"/>
        <dbReference type="ChEBI" id="CHEBI:85033"/>
        <dbReference type="ChEBI" id="CHEBI:85035"/>
        <dbReference type="EC" id="2.3.1.169"/>
    </reaction>
</comment>
<comment type="cofactor">
    <cofactor evidence="1">
        <name>[Ni-Fe-S] cluster</name>
        <dbReference type="ChEBI" id="CHEBI:60400"/>
    </cofactor>
    <text evidence="1">Binds 1 [Ni-Fe-S] cluster.</text>
</comment>
<comment type="subunit">
    <text evidence="1">Monomer. The ACDS complex is made up of alpha, epsilon, beta, gamma and delta chains with a probable stoichiometry of (alpha(2)epsilon(2))(4)-beta(8)-(gamma(1)delta(1))(8).</text>
</comment>
<comment type="similarity">
    <text evidence="1">Belongs to the CdhC family.</text>
</comment>
<sequence length="460" mass="51737">MFEDIPVDVSPMHEGERIRSANMFVELAGPKSIGAELVQVKDEVEDGKVEVKGPEIDEMEQGQVYPFAINVEVAGSELEEELESVIERRLHELCNYVKGFMHLNQRDQIWCRVSTEAKDAGFRLEHLGKALSVLFREEFPIIESIAVTLMTDEAAVQEFLETAREKYETRDSRARELSDEDVDVFYGCLMCQSFAPTHVCIVTPDRTALCGAINWFDCRAAYKMDPDGPIFEIEKGEVLDPERGEYANVNAAVEENSQGTTDRVYLHSVFGYPHTSCGCFEAVAFYIPELDGIGIVNRDFRGETPLGIPFSAMAGQCSGGKQVEGFSGLSLEYMRSPKFLQADGGYHRVIWMPRELKESVLEFIPEDVRDKIATEEDATSIKDLRRFLRDNEHPVLERAAVEETEPEEEEVEEAYPEETPIPEGVPVMAAPEMTLPAAGGFRIVLKNAKIYAEKVIIKRK</sequence>
<protein>
    <recommendedName>
        <fullName evidence="1">Acetyl-CoA decarbonylase/synthase complex subunit beta</fullName>
        <shortName evidence="1">ACDS complex subunit beta</shortName>
        <ecNumber evidence="1">2.3.1.169</ecNumber>
    </recommendedName>
    <alternativeName>
        <fullName evidence="1">ACDS complex acyltransferase</fullName>
    </alternativeName>
</protein>
<keyword id="KW-0012">Acyltransferase</keyword>
<keyword id="KW-0408">Iron</keyword>
<keyword id="KW-0411">Iron-sulfur</keyword>
<keyword id="KW-0479">Metal-binding</keyword>
<keyword id="KW-0533">Nickel</keyword>
<keyword id="KW-1185">Reference proteome</keyword>
<keyword id="KW-0808">Transferase</keyword>
<reference key="1">
    <citation type="journal article" date="1997" name="J. Bacteriol.">
        <title>Complete genome sequence of Methanobacterium thermoautotrophicum deltaH: functional analysis and comparative genomics.</title>
        <authorList>
            <person name="Smith D.R."/>
            <person name="Doucette-Stamm L.A."/>
            <person name="Deloughery C."/>
            <person name="Lee H.-M."/>
            <person name="Dubois J."/>
            <person name="Aldredge T."/>
            <person name="Bashirzadeh R."/>
            <person name="Blakely D."/>
            <person name="Cook R."/>
            <person name="Gilbert K."/>
            <person name="Harrison D."/>
            <person name="Hoang L."/>
            <person name="Keagle P."/>
            <person name="Lumm W."/>
            <person name="Pothier B."/>
            <person name="Qiu D."/>
            <person name="Spadafora R."/>
            <person name="Vicare R."/>
            <person name="Wang Y."/>
            <person name="Wierzbowski J."/>
            <person name="Gibson R."/>
            <person name="Jiwani N."/>
            <person name="Caruso A."/>
            <person name="Bush D."/>
            <person name="Safer H."/>
            <person name="Patwell D."/>
            <person name="Prabhakar S."/>
            <person name="McDougall S."/>
            <person name="Shimer G."/>
            <person name="Goyal A."/>
            <person name="Pietrovski S."/>
            <person name="Church G.M."/>
            <person name="Daniels C.J."/>
            <person name="Mao J.-I."/>
            <person name="Rice P."/>
            <person name="Noelling J."/>
            <person name="Reeve J.N."/>
        </authorList>
    </citation>
    <scope>NUCLEOTIDE SEQUENCE [LARGE SCALE GENOMIC DNA]</scope>
    <source>
        <strain>ATCC 29096 / DSM 1053 / JCM 10044 / NBRC 100330 / Delta H</strain>
    </source>
</reference>
<accession>O27745</accession>
<dbReference type="EC" id="2.3.1.169" evidence="1"/>
<dbReference type="EMBL" id="AE000666">
    <property type="protein sequence ID" value="AAB86182.1"/>
    <property type="molecule type" value="Genomic_DNA"/>
</dbReference>
<dbReference type="PIR" id="H69095">
    <property type="entry name" value="H69095"/>
</dbReference>
<dbReference type="RefSeq" id="WP_010877318.1">
    <property type="nucleotide sequence ID" value="NC_000916.1"/>
</dbReference>
<dbReference type="SMR" id="O27745"/>
<dbReference type="FunCoup" id="O27745">
    <property type="interactions" value="66"/>
</dbReference>
<dbReference type="IntAct" id="O27745">
    <property type="interactions" value="1"/>
</dbReference>
<dbReference type="STRING" id="187420.MTH_1710"/>
<dbReference type="PaxDb" id="187420-MTH_1710"/>
<dbReference type="EnsemblBacteria" id="AAB86182">
    <property type="protein sequence ID" value="AAB86182"/>
    <property type="gene ID" value="MTH_1710"/>
</dbReference>
<dbReference type="GeneID" id="1470795"/>
<dbReference type="GeneID" id="77402228"/>
<dbReference type="KEGG" id="mth:MTH_1710"/>
<dbReference type="PATRIC" id="fig|187420.15.peg.1671"/>
<dbReference type="HOGENOM" id="CLU_613408_0_0_2"/>
<dbReference type="InParanoid" id="O27745"/>
<dbReference type="Proteomes" id="UP000005223">
    <property type="component" value="Chromosome"/>
</dbReference>
<dbReference type="GO" id="GO:0016407">
    <property type="term" value="F:acetyltransferase activity"/>
    <property type="evidence" value="ECO:0007669"/>
    <property type="project" value="UniProtKB-UniRule"/>
</dbReference>
<dbReference type="GO" id="GO:0043885">
    <property type="term" value="F:anaerobic carbon-monoxide dehydrogenase activity"/>
    <property type="evidence" value="ECO:0007669"/>
    <property type="project" value="InterPro"/>
</dbReference>
<dbReference type="GO" id="GO:0043884">
    <property type="term" value="F:CO-methylating acetyl-CoA synthase activity"/>
    <property type="evidence" value="ECO:0007669"/>
    <property type="project" value="UniProtKB-EC"/>
</dbReference>
<dbReference type="GO" id="GO:0005506">
    <property type="term" value="F:iron ion binding"/>
    <property type="evidence" value="ECO:0007669"/>
    <property type="project" value="UniProtKB-UniRule"/>
</dbReference>
<dbReference type="GO" id="GO:0051536">
    <property type="term" value="F:iron-sulfur cluster binding"/>
    <property type="evidence" value="ECO:0007669"/>
    <property type="project" value="UniProtKB-KW"/>
</dbReference>
<dbReference type="GO" id="GO:0016151">
    <property type="term" value="F:nickel cation binding"/>
    <property type="evidence" value="ECO:0007669"/>
    <property type="project" value="UniProtKB-UniRule"/>
</dbReference>
<dbReference type="GO" id="GO:0006084">
    <property type="term" value="P:acetyl-CoA metabolic process"/>
    <property type="evidence" value="ECO:0007669"/>
    <property type="project" value="InterPro"/>
</dbReference>
<dbReference type="Gene3D" id="3.30.1650.10">
    <property type="entry name" value="Bifunctional carbon monoxide dehydrogenase/acetyl-coa synthase(codh/acs), Chain M, domain 3"/>
    <property type="match status" value="1"/>
</dbReference>
<dbReference type="Gene3D" id="3.40.1470.10">
    <property type="entry name" value="Bifunctional carbon monoxide dehydrogenase/acetyl-coa synthase(codh/acs), Chain M, domain 5"/>
    <property type="match status" value="1"/>
</dbReference>
<dbReference type="Gene3D" id="3.40.970.20">
    <property type="entry name" value="Carbon monoxide dehydrogenase alpha subunit. Chain D, domain 4"/>
    <property type="match status" value="1"/>
</dbReference>
<dbReference type="HAMAP" id="MF_01138">
    <property type="entry name" value="CdhC"/>
    <property type="match status" value="1"/>
</dbReference>
<dbReference type="InterPro" id="IPR045822">
    <property type="entry name" value="ACS_CODH_B_C"/>
</dbReference>
<dbReference type="InterPro" id="IPR004461">
    <property type="entry name" value="CO_DH/Ac-CoA_synth_bsu"/>
</dbReference>
<dbReference type="InterPro" id="IPR038571">
    <property type="entry name" value="CO_DH/Ac-CoA_synth_bsu_3_sf"/>
</dbReference>
<dbReference type="InterPro" id="IPR023432">
    <property type="entry name" value="CO_DH/Ac-CoA_synth_bsu_arc"/>
</dbReference>
<dbReference type="InterPro" id="IPR011254">
    <property type="entry name" value="Prismane-like_sf"/>
</dbReference>
<dbReference type="NCBIfam" id="TIGR00316">
    <property type="entry name" value="cdhC"/>
    <property type="match status" value="1"/>
</dbReference>
<dbReference type="NCBIfam" id="NF003379">
    <property type="entry name" value="PRK04456.1"/>
    <property type="match status" value="1"/>
</dbReference>
<dbReference type="PANTHER" id="PTHR42281">
    <property type="match status" value="1"/>
</dbReference>
<dbReference type="PANTHER" id="PTHR42281:SF1">
    <property type="entry name" value="ACETYL-COA DECARBONYLASE_SYNTHASE COMPLEX SUBUNIT BETA 1"/>
    <property type="match status" value="1"/>
</dbReference>
<dbReference type="Pfam" id="PF19436">
    <property type="entry name" value="ACS_CODH_B_C"/>
    <property type="match status" value="1"/>
</dbReference>
<dbReference type="Pfam" id="PF03598">
    <property type="entry name" value="CdhC"/>
    <property type="match status" value="1"/>
</dbReference>
<dbReference type="SUPFAM" id="SSF56821">
    <property type="entry name" value="Prismane protein-like"/>
    <property type="match status" value="1"/>
</dbReference>
<feature type="chain" id="PRO_0000155108" description="Acetyl-CoA decarbonylase/synthase complex subunit beta">
    <location>
        <begin position="1"/>
        <end position="460"/>
    </location>
</feature>
<feature type="region of interest" description="Disordered" evidence="2">
    <location>
        <begin position="402"/>
        <end position="422"/>
    </location>
</feature>
<feature type="compositionally biased region" description="Acidic residues" evidence="2">
    <location>
        <begin position="402"/>
        <end position="416"/>
    </location>
</feature>
<feature type="binding site" evidence="1">
    <location>
        <position position="188"/>
    </location>
    <ligand>
        <name>[Ni-Fe-S] cluster</name>
        <dbReference type="ChEBI" id="CHEBI:60400"/>
    </ligand>
</feature>
<feature type="binding site" evidence="1">
    <location>
        <position position="191"/>
    </location>
    <ligand>
        <name>[Ni-Fe-S] cluster</name>
        <dbReference type="ChEBI" id="CHEBI:60400"/>
    </ligand>
</feature>
<feature type="binding site" evidence="1">
    <location>
        <position position="277"/>
    </location>
    <ligand>
        <name>[Ni-Fe-S] cluster</name>
        <dbReference type="ChEBI" id="CHEBI:60400"/>
    </ligand>
</feature>
<feature type="binding site" evidence="1">
    <location>
        <position position="279"/>
    </location>
    <ligand>
        <name>[Ni-Fe-S] cluster</name>
        <dbReference type="ChEBI" id="CHEBI:60400"/>
    </ligand>
</feature>
<gene>
    <name evidence="1" type="primary">cdhC</name>
    <name type="ordered locus">MTH_1710</name>
</gene>
<proteinExistence type="inferred from homology"/>